<feature type="chain" id="PRO_0000172242" description="S-ribosylhomocysteine lyase">
    <location>
        <begin position="1"/>
        <end position="168"/>
    </location>
</feature>
<feature type="binding site" evidence="1">
    <location>
        <position position="54"/>
    </location>
    <ligand>
        <name>Fe cation</name>
        <dbReference type="ChEBI" id="CHEBI:24875"/>
    </ligand>
</feature>
<feature type="binding site" evidence="1">
    <location>
        <position position="58"/>
    </location>
    <ligand>
        <name>Fe cation</name>
        <dbReference type="ChEBI" id="CHEBI:24875"/>
    </ligand>
</feature>
<feature type="binding site" evidence="1">
    <location>
        <position position="128"/>
    </location>
    <ligand>
        <name>Fe cation</name>
        <dbReference type="ChEBI" id="CHEBI:24875"/>
    </ligand>
</feature>
<protein>
    <recommendedName>
        <fullName>S-ribosylhomocysteine lyase</fullName>
        <ecNumber>4.4.1.21</ecNumber>
    </recommendedName>
    <alternativeName>
        <fullName>AI-2 synthesis protein</fullName>
    </alternativeName>
    <alternativeName>
        <fullName>Autoinducer-2 production protein LuxS</fullName>
    </alternativeName>
</protein>
<accession>P57901</accession>
<proteinExistence type="inferred from homology"/>
<gene>
    <name type="primary">luxS</name>
    <name type="ordered locus">PM1054</name>
</gene>
<name>LUXS_PASMU</name>
<reference key="1">
    <citation type="journal article" date="2001" name="Proc. Natl. Acad. Sci. U.S.A.">
        <title>Complete genomic sequence of Pasteurella multocida Pm70.</title>
        <authorList>
            <person name="May B.J."/>
            <person name="Zhang Q."/>
            <person name="Li L.L."/>
            <person name="Paustian M.L."/>
            <person name="Whittam T.S."/>
            <person name="Kapur V."/>
        </authorList>
    </citation>
    <scope>NUCLEOTIDE SEQUENCE [LARGE SCALE GENOMIC DNA]</scope>
    <source>
        <strain>Pm70</strain>
    </source>
</reference>
<comment type="function">
    <text evidence="1">Involved in the synthesis of autoinducer 2 (AI-2) which is secreted by bacteria and is used to communicate both the cell density and the metabolic potential of the environment. The regulation of gene expression in response to changes in cell density is called quorum sensing. Catalyzes the transformation of S-ribosylhomocysteine (RHC) to homocysteine (HC) and 4,5-dihydroxy-2,3-pentadione (DPD) (By similarity).</text>
</comment>
<comment type="catalytic activity">
    <reaction>
        <text>S-(5-deoxy-D-ribos-5-yl)-L-homocysteine = (S)-4,5-dihydroxypentane-2,3-dione + L-homocysteine</text>
        <dbReference type="Rhea" id="RHEA:17753"/>
        <dbReference type="ChEBI" id="CHEBI:29484"/>
        <dbReference type="ChEBI" id="CHEBI:58195"/>
        <dbReference type="ChEBI" id="CHEBI:58199"/>
        <dbReference type="EC" id="4.4.1.21"/>
    </reaction>
</comment>
<comment type="cofactor">
    <cofactor evidence="1">
        <name>Fe cation</name>
        <dbReference type="ChEBI" id="CHEBI:24875"/>
    </cofactor>
    <text evidence="1">Binds 1 Fe cation per subunit.</text>
</comment>
<comment type="subunit">
    <text evidence="1">Homodimer.</text>
</comment>
<comment type="similarity">
    <text evidence="2">Belongs to the LuxS family.</text>
</comment>
<keyword id="KW-0071">Autoinducer synthesis</keyword>
<keyword id="KW-0408">Iron</keyword>
<keyword id="KW-0456">Lyase</keyword>
<keyword id="KW-0479">Metal-binding</keyword>
<keyword id="KW-0673">Quorum sensing</keyword>
<keyword id="KW-1185">Reference proteome</keyword>
<dbReference type="EC" id="4.4.1.21"/>
<dbReference type="EMBL" id="AE004439">
    <property type="protein sequence ID" value="AAK03138.1"/>
    <property type="molecule type" value="Genomic_DNA"/>
</dbReference>
<dbReference type="RefSeq" id="WP_005717368.1">
    <property type="nucleotide sequence ID" value="NC_002663.1"/>
</dbReference>
<dbReference type="SMR" id="P57901"/>
<dbReference type="STRING" id="272843.PM1054"/>
<dbReference type="EnsemblBacteria" id="AAK03138">
    <property type="protein sequence ID" value="AAK03138"/>
    <property type="gene ID" value="PM1054"/>
</dbReference>
<dbReference type="GeneID" id="77206370"/>
<dbReference type="KEGG" id="pmu:PM1054"/>
<dbReference type="HOGENOM" id="CLU_107531_2_0_6"/>
<dbReference type="OrthoDB" id="9788129at2"/>
<dbReference type="Proteomes" id="UP000000809">
    <property type="component" value="Chromosome"/>
</dbReference>
<dbReference type="GO" id="GO:0005506">
    <property type="term" value="F:iron ion binding"/>
    <property type="evidence" value="ECO:0007669"/>
    <property type="project" value="InterPro"/>
</dbReference>
<dbReference type="GO" id="GO:0043768">
    <property type="term" value="F:S-ribosylhomocysteine lyase activity"/>
    <property type="evidence" value="ECO:0007669"/>
    <property type="project" value="UniProtKB-UniRule"/>
</dbReference>
<dbReference type="GO" id="GO:0009372">
    <property type="term" value="P:quorum sensing"/>
    <property type="evidence" value="ECO:0007669"/>
    <property type="project" value="UniProtKB-UniRule"/>
</dbReference>
<dbReference type="Gene3D" id="3.30.1360.80">
    <property type="entry name" value="S-ribosylhomocysteinase (LuxS)"/>
    <property type="match status" value="1"/>
</dbReference>
<dbReference type="HAMAP" id="MF_00091">
    <property type="entry name" value="LuxS"/>
    <property type="match status" value="1"/>
</dbReference>
<dbReference type="InterPro" id="IPR037005">
    <property type="entry name" value="LuxS_sf"/>
</dbReference>
<dbReference type="InterPro" id="IPR011249">
    <property type="entry name" value="Metalloenz_LuxS/M16"/>
</dbReference>
<dbReference type="InterPro" id="IPR003815">
    <property type="entry name" value="S-ribosylhomocysteinase"/>
</dbReference>
<dbReference type="NCBIfam" id="NF002602">
    <property type="entry name" value="PRK02260.1-2"/>
    <property type="match status" value="1"/>
</dbReference>
<dbReference type="PANTHER" id="PTHR35799">
    <property type="entry name" value="S-RIBOSYLHOMOCYSTEINE LYASE"/>
    <property type="match status" value="1"/>
</dbReference>
<dbReference type="PANTHER" id="PTHR35799:SF1">
    <property type="entry name" value="S-RIBOSYLHOMOCYSTEINE LYASE"/>
    <property type="match status" value="1"/>
</dbReference>
<dbReference type="Pfam" id="PF02664">
    <property type="entry name" value="LuxS"/>
    <property type="match status" value="1"/>
</dbReference>
<dbReference type="PIRSF" id="PIRSF006160">
    <property type="entry name" value="AI2"/>
    <property type="match status" value="1"/>
</dbReference>
<dbReference type="PRINTS" id="PR01487">
    <property type="entry name" value="LUXSPROTEIN"/>
</dbReference>
<dbReference type="SUPFAM" id="SSF63411">
    <property type="entry name" value="LuxS/MPP-like metallohydrolase"/>
    <property type="match status" value="1"/>
</dbReference>
<organism>
    <name type="scientific">Pasteurella multocida (strain Pm70)</name>
    <dbReference type="NCBI Taxonomy" id="272843"/>
    <lineage>
        <taxon>Bacteria</taxon>
        <taxon>Pseudomonadati</taxon>
        <taxon>Pseudomonadota</taxon>
        <taxon>Gammaproteobacteria</taxon>
        <taxon>Pasteurellales</taxon>
        <taxon>Pasteurellaceae</taxon>
        <taxon>Pasteurella</taxon>
    </lineage>
</organism>
<sequence>MPLLDSFKVDHTRMKAPAVRIAKTMTTPKGDNITVFDLRFCIPNKEILSPKGIHTLEHLFAGFMRDHLNGTEVEIIDISPMGCRTGFYMSLIGTPNEQQVADAWLASMRDVLLVKDQAQIPELNAFQCGTYTEHSLAEAQQIAHNVLERGVSVNKNEDLLLDEQLLSL</sequence>
<evidence type="ECO:0000250" key="1"/>
<evidence type="ECO:0000305" key="2"/>